<reference key="1">
    <citation type="journal article" date="1997" name="Nature">
        <title>The complete genome sequence of the Gram-positive bacterium Bacillus subtilis.</title>
        <authorList>
            <person name="Kunst F."/>
            <person name="Ogasawara N."/>
            <person name="Moszer I."/>
            <person name="Albertini A.M."/>
            <person name="Alloni G."/>
            <person name="Azevedo V."/>
            <person name="Bertero M.G."/>
            <person name="Bessieres P."/>
            <person name="Bolotin A."/>
            <person name="Borchert S."/>
            <person name="Borriss R."/>
            <person name="Boursier L."/>
            <person name="Brans A."/>
            <person name="Braun M."/>
            <person name="Brignell S.C."/>
            <person name="Bron S."/>
            <person name="Brouillet S."/>
            <person name="Bruschi C.V."/>
            <person name="Caldwell B."/>
            <person name="Capuano V."/>
            <person name="Carter N.M."/>
            <person name="Choi S.-K."/>
            <person name="Codani J.-J."/>
            <person name="Connerton I.F."/>
            <person name="Cummings N.J."/>
            <person name="Daniel R.A."/>
            <person name="Denizot F."/>
            <person name="Devine K.M."/>
            <person name="Duesterhoeft A."/>
            <person name="Ehrlich S.D."/>
            <person name="Emmerson P.T."/>
            <person name="Entian K.-D."/>
            <person name="Errington J."/>
            <person name="Fabret C."/>
            <person name="Ferrari E."/>
            <person name="Foulger D."/>
            <person name="Fritz C."/>
            <person name="Fujita M."/>
            <person name="Fujita Y."/>
            <person name="Fuma S."/>
            <person name="Galizzi A."/>
            <person name="Galleron N."/>
            <person name="Ghim S.-Y."/>
            <person name="Glaser P."/>
            <person name="Goffeau A."/>
            <person name="Golightly E.J."/>
            <person name="Grandi G."/>
            <person name="Guiseppi G."/>
            <person name="Guy B.J."/>
            <person name="Haga K."/>
            <person name="Haiech J."/>
            <person name="Harwood C.R."/>
            <person name="Henaut A."/>
            <person name="Hilbert H."/>
            <person name="Holsappel S."/>
            <person name="Hosono S."/>
            <person name="Hullo M.-F."/>
            <person name="Itaya M."/>
            <person name="Jones L.-M."/>
            <person name="Joris B."/>
            <person name="Karamata D."/>
            <person name="Kasahara Y."/>
            <person name="Klaerr-Blanchard M."/>
            <person name="Klein C."/>
            <person name="Kobayashi Y."/>
            <person name="Koetter P."/>
            <person name="Koningstein G."/>
            <person name="Krogh S."/>
            <person name="Kumano M."/>
            <person name="Kurita K."/>
            <person name="Lapidus A."/>
            <person name="Lardinois S."/>
            <person name="Lauber J."/>
            <person name="Lazarevic V."/>
            <person name="Lee S.-M."/>
            <person name="Levine A."/>
            <person name="Liu H."/>
            <person name="Masuda S."/>
            <person name="Mauel C."/>
            <person name="Medigue C."/>
            <person name="Medina N."/>
            <person name="Mellado R.P."/>
            <person name="Mizuno M."/>
            <person name="Moestl D."/>
            <person name="Nakai S."/>
            <person name="Noback M."/>
            <person name="Noone D."/>
            <person name="O'Reilly M."/>
            <person name="Ogawa K."/>
            <person name="Ogiwara A."/>
            <person name="Oudega B."/>
            <person name="Park S.-H."/>
            <person name="Parro V."/>
            <person name="Pohl T.M."/>
            <person name="Portetelle D."/>
            <person name="Porwollik S."/>
            <person name="Prescott A.M."/>
            <person name="Presecan E."/>
            <person name="Pujic P."/>
            <person name="Purnelle B."/>
            <person name="Rapoport G."/>
            <person name="Rey M."/>
            <person name="Reynolds S."/>
            <person name="Rieger M."/>
            <person name="Rivolta C."/>
            <person name="Rocha E."/>
            <person name="Roche B."/>
            <person name="Rose M."/>
            <person name="Sadaie Y."/>
            <person name="Sato T."/>
            <person name="Scanlan E."/>
            <person name="Schleich S."/>
            <person name="Schroeter R."/>
            <person name="Scoffone F."/>
            <person name="Sekiguchi J."/>
            <person name="Sekowska A."/>
            <person name="Seror S.J."/>
            <person name="Serror P."/>
            <person name="Shin B.-S."/>
            <person name="Soldo B."/>
            <person name="Sorokin A."/>
            <person name="Tacconi E."/>
            <person name="Takagi T."/>
            <person name="Takahashi H."/>
            <person name="Takemaru K."/>
            <person name="Takeuchi M."/>
            <person name="Tamakoshi A."/>
            <person name="Tanaka T."/>
            <person name="Terpstra P."/>
            <person name="Tognoni A."/>
            <person name="Tosato V."/>
            <person name="Uchiyama S."/>
            <person name="Vandenbol M."/>
            <person name="Vannier F."/>
            <person name="Vassarotti A."/>
            <person name="Viari A."/>
            <person name="Wambutt R."/>
            <person name="Wedler E."/>
            <person name="Wedler H."/>
            <person name="Weitzenegger T."/>
            <person name="Winters P."/>
            <person name="Wipat A."/>
            <person name="Yamamoto H."/>
            <person name="Yamane K."/>
            <person name="Yasumoto K."/>
            <person name="Yata K."/>
            <person name="Yoshida K."/>
            <person name="Yoshikawa H.-F."/>
            <person name="Zumstein E."/>
            <person name="Yoshikawa H."/>
            <person name="Danchin A."/>
        </authorList>
    </citation>
    <scope>NUCLEOTIDE SEQUENCE [LARGE SCALE GENOMIC DNA]</scope>
    <source>
        <strain>168</strain>
    </source>
</reference>
<keyword id="KW-1185">Reference proteome</keyword>
<gene>
    <name type="primary">yokK</name>
    <name type="ordered locus">BSU21560</name>
</gene>
<protein>
    <recommendedName>
        <fullName>SPbeta prophage-derived uncharacterized protein YokK</fullName>
    </recommendedName>
</protein>
<proteinExistence type="predicted"/>
<feature type="chain" id="PRO_0000360585" description="SPbeta prophage-derived uncharacterized protein YokK">
    <location>
        <begin position="1"/>
        <end position="192"/>
    </location>
</feature>
<sequence length="192" mass="22053">MSFTKIEQKLKEFTIDAGRYPSINTNEQLKELEMNIGNQLPSDYKDFLKKYGGCYLESKKTTDEIEYDVCYKPLEKDPWMGKGDDTQLLEGFYGLANDHNSLQKAIDTYSDRFPRNIIPIASSAGGNEICMDIDNGKILFWDHELSHPDKDFFLIANSFEEFVFSLVDEPIEADKEDDGILYIELDDDLLSS</sequence>
<name>YOKK_BACSU</name>
<organism>
    <name type="scientific">Bacillus subtilis (strain 168)</name>
    <dbReference type="NCBI Taxonomy" id="224308"/>
    <lineage>
        <taxon>Bacteria</taxon>
        <taxon>Bacillati</taxon>
        <taxon>Bacillota</taxon>
        <taxon>Bacilli</taxon>
        <taxon>Bacillales</taxon>
        <taxon>Bacillaceae</taxon>
        <taxon>Bacillus</taxon>
    </lineage>
</organism>
<dbReference type="EMBL" id="AL009126">
    <property type="protein sequence ID" value="CAB14074.1"/>
    <property type="molecule type" value="Genomic_DNA"/>
</dbReference>
<dbReference type="RefSeq" id="NP_390039.1">
    <property type="nucleotide sequence ID" value="NC_000964.3"/>
</dbReference>
<dbReference type="RefSeq" id="WP_004399123.1">
    <property type="nucleotide sequence ID" value="NZ_OZ025638.1"/>
</dbReference>
<dbReference type="FunCoup" id="O31996">
    <property type="interactions" value="50"/>
</dbReference>
<dbReference type="STRING" id="224308.BSU21560"/>
<dbReference type="PaxDb" id="224308-BSU21560"/>
<dbReference type="EnsemblBacteria" id="CAB14074">
    <property type="protein sequence ID" value="CAB14074"/>
    <property type="gene ID" value="BSU_21560"/>
</dbReference>
<dbReference type="GeneID" id="939116"/>
<dbReference type="KEGG" id="bsu:BSU21560"/>
<dbReference type="PATRIC" id="fig|224308.179.peg.2354"/>
<dbReference type="eggNOG" id="ENOG50330S4">
    <property type="taxonomic scope" value="Bacteria"/>
</dbReference>
<dbReference type="InParanoid" id="O31996"/>
<dbReference type="OrthoDB" id="8657476at2"/>
<dbReference type="BioCyc" id="BSUB:BSU21560-MONOMER"/>
<dbReference type="Proteomes" id="UP000001570">
    <property type="component" value="Chromosome"/>
</dbReference>
<dbReference type="Gene3D" id="3.40.1580.10">
    <property type="entry name" value="SMI1/KNR4-like"/>
    <property type="match status" value="1"/>
</dbReference>
<dbReference type="InterPro" id="IPR018958">
    <property type="entry name" value="Knr4/Smi1-like_dom"/>
</dbReference>
<dbReference type="InterPro" id="IPR037883">
    <property type="entry name" value="Knr4/Smi1-like_sf"/>
</dbReference>
<dbReference type="Pfam" id="PF14568">
    <property type="entry name" value="SUKH_6"/>
    <property type="match status" value="1"/>
</dbReference>
<dbReference type="SMART" id="SM00860">
    <property type="entry name" value="SMI1_KNR4"/>
    <property type="match status" value="1"/>
</dbReference>
<dbReference type="SUPFAM" id="SSF160631">
    <property type="entry name" value="SMI1/KNR4-like"/>
    <property type="match status" value="1"/>
</dbReference>
<accession>O31996</accession>